<reference key="1">
    <citation type="journal article" date="2009" name="PLoS Biol.">
        <title>Lineage-specific biology revealed by a finished genome assembly of the mouse.</title>
        <authorList>
            <person name="Church D.M."/>
            <person name="Goodstadt L."/>
            <person name="Hillier L.W."/>
            <person name="Zody M.C."/>
            <person name="Goldstein S."/>
            <person name="She X."/>
            <person name="Bult C.J."/>
            <person name="Agarwala R."/>
            <person name="Cherry J.L."/>
            <person name="DiCuccio M."/>
            <person name="Hlavina W."/>
            <person name="Kapustin Y."/>
            <person name="Meric P."/>
            <person name="Maglott D."/>
            <person name="Birtle Z."/>
            <person name="Marques A.C."/>
            <person name="Graves T."/>
            <person name="Zhou S."/>
            <person name="Teague B."/>
            <person name="Potamousis K."/>
            <person name="Churas C."/>
            <person name="Place M."/>
            <person name="Herschleb J."/>
            <person name="Runnheim R."/>
            <person name="Forrest D."/>
            <person name="Amos-Landgraf J."/>
            <person name="Schwartz D.C."/>
            <person name="Cheng Z."/>
            <person name="Lindblad-Toh K."/>
            <person name="Eichler E.E."/>
            <person name="Ponting C.P."/>
        </authorList>
    </citation>
    <scope>NUCLEOTIDE SEQUENCE [LARGE SCALE GENOMIC DNA]</scope>
    <source>
        <strain>C57BL/6J</strain>
    </source>
</reference>
<reference key="2">
    <citation type="journal article" date="2004" name="Genome Res.">
        <title>The status, quality, and expansion of the NIH full-length cDNA project: the Mammalian Gene Collection (MGC).</title>
        <authorList>
            <consortium name="The MGC Project Team"/>
        </authorList>
    </citation>
    <scope>NUCLEOTIDE SEQUENCE [LARGE SCALE MRNA]</scope>
    <source>
        <tissue>Thyroid</tissue>
    </source>
</reference>
<reference key="3">
    <citation type="journal article" date="2010" name="Cell">
        <title>A tissue-specific atlas of mouse protein phosphorylation and expression.</title>
        <authorList>
            <person name="Huttlin E.L."/>
            <person name="Jedrychowski M.P."/>
            <person name="Elias J.E."/>
            <person name="Goswami T."/>
            <person name="Rad R."/>
            <person name="Beausoleil S.A."/>
            <person name="Villen J."/>
            <person name="Haas W."/>
            <person name="Sowa M.E."/>
            <person name="Gygi S.P."/>
        </authorList>
    </citation>
    <scope>IDENTIFICATION BY MASS SPECTROMETRY [LARGE SCALE ANALYSIS]</scope>
    <source>
        <tissue>Brown adipose tissue</tissue>
    </source>
</reference>
<reference key="4">
    <citation type="journal article" date="2024" name="Exp. Mol. Med.">
        <title>MYH1 deficiency disrupts outer hair cell electromotility, resulting in hearing loss.</title>
        <authorList>
            <person name="Jung J."/>
            <person name="Joo S.Y."/>
            <person name="Min H."/>
            <person name="Roh J.W."/>
            <person name="Kim K.A."/>
            <person name="Ma J.H."/>
            <person name="Rim J.H."/>
            <person name="Kim J.A."/>
            <person name="Kim S.J."/>
            <person name="Jang S.H."/>
            <person name="Koh Y.I."/>
            <person name="Kim H.Y."/>
            <person name="Lee H."/>
            <person name="Kim B.C."/>
            <person name="Gee H.Y."/>
            <person name="Bok J."/>
            <person name="Choi J.Y."/>
            <person name="Seong J.K."/>
        </authorList>
    </citation>
    <scope>FUNCTION</scope>
    <scope>DISRUPTION PHENOTYPE</scope>
    <scope>TISSUE SPECIFICITY</scope>
</reference>
<keyword id="KW-0009">Actin-binding</keyword>
<keyword id="KW-0067">ATP-binding</keyword>
<keyword id="KW-0112">Calmodulin-binding</keyword>
<keyword id="KW-0175">Coiled coil</keyword>
<keyword id="KW-0963">Cytoplasm</keyword>
<keyword id="KW-1009">Hearing</keyword>
<keyword id="KW-0488">Methylation</keyword>
<keyword id="KW-0505">Motor protein</keyword>
<keyword id="KW-0514">Muscle protein</keyword>
<keyword id="KW-0518">Myosin</keyword>
<keyword id="KW-0547">Nucleotide-binding</keyword>
<keyword id="KW-0597">Phosphoprotein</keyword>
<keyword id="KW-1185">Reference proteome</keyword>
<keyword id="KW-0787">Thick filament</keyword>
<feature type="chain" id="PRO_0000123392" description="Myosin-1">
    <location>
        <begin position="1"/>
        <end position="1942"/>
    </location>
</feature>
<feature type="domain" description="Myosin N-terminal SH3-like" evidence="8">
    <location>
        <begin position="33"/>
        <end position="82"/>
    </location>
</feature>
<feature type="domain" description="Myosin motor" evidence="7">
    <location>
        <begin position="86"/>
        <end position="785"/>
    </location>
</feature>
<feature type="domain" description="IQ" evidence="6">
    <location>
        <begin position="788"/>
        <end position="817"/>
    </location>
</feature>
<feature type="region of interest" description="Actin-binding" evidence="1">
    <location>
        <begin position="662"/>
        <end position="684"/>
    </location>
</feature>
<feature type="region of interest" description="Actin-binding" evidence="1">
    <location>
        <begin position="764"/>
        <end position="778"/>
    </location>
</feature>
<feature type="region of interest" description="Disordered" evidence="9">
    <location>
        <begin position="1156"/>
        <end position="1175"/>
    </location>
</feature>
<feature type="coiled-coil region" evidence="5">
    <location>
        <begin position="846"/>
        <end position="1942"/>
    </location>
</feature>
<feature type="binding site" evidence="5">
    <location>
        <begin position="179"/>
        <end position="186"/>
    </location>
    <ligand>
        <name>ATP</name>
        <dbReference type="ChEBI" id="CHEBI:30616"/>
    </ligand>
</feature>
<feature type="modified residue" description="Phosphoserine" evidence="4">
    <location>
        <position position="36"/>
    </location>
</feature>
<feature type="modified residue" description="Phosphothreonine" evidence="4">
    <location>
        <position position="64"/>
    </location>
</feature>
<feature type="modified residue" description="Phosphothreonine" evidence="4">
    <location>
        <position position="69"/>
    </location>
</feature>
<feature type="modified residue" description="N6,N6,N6-trimethyllysine" evidence="5">
    <location>
        <position position="130"/>
    </location>
</feature>
<feature type="modified residue" description="Phosphotyrosine" evidence="4">
    <location>
        <position position="389"/>
    </location>
</feature>
<feature type="modified residue" description="Phosphothreonine" evidence="4">
    <location>
        <position position="419"/>
    </location>
</feature>
<feature type="modified residue" description="Phosphotyrosine" evidence="4">
    <location>
        <position position="424"/>
    </location>
</feature>
<feature type="modified residue" description="Phosphoserine" evidence="4">
    <location>
        <position position="625"/>
    </location>
</feature>
<feature type="modified residue" description="Pros-methylhistidine" evidence="3">
    <location>
        <position position="760"/>
    </location>
</feature>
<feature type="modified residue" description="Phosphoserine" evidence="4">
    <location>
        <position position="1095"/>
    </location>
</feature>
<feature type="modified residue" description="Phosphoserine" evidence="4">
    <location>
        <position position="1099"/>
    </location>
</feature>
<feature type="modified residue" description="Phosphoserine" evidence="4">
    <location>
        <position position="1165"/>
    </location>
</feature>
<feature type="modified residue" description="Phosphoserine" evidence="4">
    <location>
        <position position="1240"/>
    </location>
</feature>
<feature type="modified residue" description="Phosphoserine" evidence="4">
    <location>
        <position position="1246"/>
    </location>
</feature>
<feature type="modified residue" description="Phosphothreonine" evidence="4">
    <location>
        <position position="1258"/>
    </location>
</feature>
<feature type="modified residue" description="Phosphoserine" evidence="4">
    <location>
        <position position="1264"/>
    </location>
</feature>
<feature type="modified residue" description="Phosphothreonine" evidence="4">
    <location>
        <position position="1268"/>
    </location>
</feature>
<feature type="modified residue" description="Phosphothreonine" evidence="4">
    <location>
        <position position="1289"/>
    </location>
</feature>
<feature type="modified residue" description="Phosphoserine" evidence="4">
    <location>
        <position position="1291"/>
    </location>
</feature>
<feature type="modified residue" description="Phosphoserine" evidence="4">
    <location>
        <position position="1295"/>
    </location>
</feature>
<feature type="modified residue" description="Phosphoserine" evidence="4">
    <location>
        <position position="1306"/>
    </location>
</feature>
<feature type="modified residue" description="Phosphoserine" evidence="4">
    <location>
        <position position="1309"/>
    </location>
</feature>
<feature type="modified residue" description="Phosphotyrosine" evidence="4">
    <location>
        <position position="1467"/>
    </location>
</feature>
<feature type="modified residue" description="Phosphothreonine" evidence="4">
    <location>
        <position position="1470"/>
    </location>
</feature>
<feature type="modified residue" description="Phosphoserine" evidence="4">
    <location>
        <position position="1477"/>
    </location>
</feature>
<feature type="modified residue" description="Phosphotyrosine" evidence="4">
    <location>
        <position position="1495"/>
    </location>
</feature>
<feature type="modified residue" description="Phosphoserine" evidence="4">
    <location>
        <position position="1498"/>
    </location>
</feature>
<feature type="modified residue" description="Phosphothreonine" evidence="4">
    <location>
        <position position="1504"/>
    </location>
</feature>
<feature type="modified residue" description="Phosphoserine" evidence="4">
    <location>
        <position position="1517"/>
    </location>
</feature>
<feature type="modified residue" description="Phosphothreonine" evidence="4">
    <location>
        <position position="1520"/>
    </location>
</feature>
<feature type="modified residue" description="Phosphoserine" evidence="4">
    <location>
        <position position="1545"/>
    </location>
</feature>
<feature type="modified residue" description="Phosphoserine" evidence="4">
    <location>
        <position position="1557"/>
    </location>
</feature>
<feature type="modified residue" description="Phosphoserine" evidence="4">
    <location>
        <position position="1577"/>
    </location>
</feature>
<feature type="modified residue" description="Phosphoserine" evidence="4">
    <location>
        <position position="1603"/>
    </location>
</feature>
<feature type="modified residue" description="Phosphoserine" evidence="4">
    <location>
        <position position="1606"/>
    </location>
</feature>
<feature type="modified residue" description="Phosphoserine" evidence="4">
    <location>
        <position position="1717"/>
    </location>
</feature>
<feature type="modified residue" description="Phosphoserine" evidence="4">
    <location>
        <position position="1729"/>
    </location>
</feature>
<feature type="modified residue" description="Phosphothreonine" evidence="4">
    <location>
        <position position="1733"/>
    </location>
</feature>
<feature type="modified residue" description="Phosphothreonine" evidence="4">
    <location>
        <position position="1739"/>
    </location>
</feature>
<feature type="modified residue" description="Phosphoserine" evidence="4">
    <location>
        <position position="1742"/>
    </location>
</feature>
<dbReference type="EMBL" id="AL596129">
    <property type="status" value="NOT_ANNOTATED_CDS"/>
    <property type="molecule type" value="Genomic_DNA"/>
</dbReference>
<dbReference type="EMBL" id="BC108329">
    <property type="protein sequence ID" value="AAI08330.1"/>
    <property type="molecule type" value="mRNA"/>
</dbReference>
<dbReference type="CCDS" id="CCDS24855.1"/>
<dbReference type="RefSeq" id="NP_109604.1">
    <property type="nucleotide sequence ID" value="NM_030679.2"/>
</dbReference>
<dbReference type="RefSeq" id="XP_017169807.1">
    <property type="nucleotide sequence ID" value="XM_017314318.3"/>
</dbReference>
<dbReference type="SMR" id="Q5SX40"/>
<dbReference type="BioGRID" id="201643">
    <property type="interactions" value="15"/>
</dbReference>
<dbReference type="FunCoup" id="Q5SX40">
    <property type="interactions" value="247"/>
</dbReference>
<dbReference type="IntAct" id="Q5SX40">
    <property type="interactions" value="2"/>
</dbReference>
<dbReference type="STRING" id="10090.ENSMUSP00000117569"/>
<dbReference type="GlyGen" id="Q5SX40">
    <property type="glycosylation" value="1 site, 1 O-linked glycan (1 site)"/>
</dbReference>
<dbReference type="iPTMnet" id="Q5SX40"/>
<dbReference type="PhosphoSitePlus" id="Q5SX40"/>
<dbReference type="jPOST" id="Q5SX40"/>
<dbReference type="PaxDb" id="10090-ENSMUSP00000117569"/>
<dbReference type="ProteomicsDB" id="287527"/>
<dbReference type="Pumba" id="Q5SX40"/>
<dbReference type="Antibodypedia" id="4383">
    <property type="antibodies" value="197 antibodies from 28 providers"/>
</dbReference>
<dbReference type="DNASU" id="17879"/>
<dbReference type="Ensembl" id="ENSMUST00000018637.15">
    <property type="protein sequence ID" value="ENSMUSP00000018637.9"/>
    <property type="gene ID" value="ENSMUSG00000056328.15"/>
</dbReference>
<dbReference type="Ensembl" id="ENSMUST00000075734.6">
    <property type="protein sequence ID" value="ENSMUSP00000075147.6"/>
    <property type="gene ID" value="ENSMUSG00000056328.15"/>
</dbReference>
<dbReference type="Ensembl" id="ENSMUST00000124516.8">
    <property type="protein sequence ID" value="ENSMUSP00000117569.2"/>
    <property type="gene ID" value="ENSMUSG00000056328.15"/>
</dbReference>
<dbReference type="GeneID" id="17879"/>
<dbReference type="KEGG" id="mmu:17879"/>
<dbReference type="UCSC" id="uc007jmg.1">
    <property type="organism name" value="mouse"/>
</dbReference>
<dbReference type="AGR" id="MGI:1339711"/>
<dbReference type="CTD" id="4619"/>
<dbReference type="MGI" id="MGI:1339711">
    <property type="gene designation" value="Myh1"/>
</dbReference>
<dbReference type="VEuPathDB" id="HostDB:ENSMUSG00000056328"/>
<dbReference type="eggNOG" id="KOG0161">
    <property type="taxonomic scope" value="Eukaryota"/>
</dbReference>
<dbReference type="GeneTree" id="ENSGT00940000154760"/>
<dbReference type="HOGENOM" id="CLU_000192_8_1_1"/>
<dbReference type="InParanoid" id="Q5SX40"/>
<dbReference type="OMA" id="TWDWFLL"/>
<dbReference type="OrthoDB" id="312459at2759"/>
<dbReference type="PhylomeDB" id="Q5SX40"/>
<dbReference type="TreeFam" id="TF314375"/>
<dbReference type="BioGRID-ORCS" id="17879">
    <property type="hits" value="1 hit in 76 CRISPR screens"/>
</dbReference>
<dbReference type="ChiTaRS" id="Myh1">
    <property type="organism name" value="mouse"/>
</dbReference>
<dbReference type="PRO" id="PR:Q5SX40"/>
<dbReference type="Proteomes" id="UP000000589">
    <property type="component" value="Chromosome 11"/>
</dbReference>
<dbReference type="RNAct" id="Q5SX40">
    <property type="molecule type" value="protein"/>
</dbReference>
<dbReference type="Bgee" id="ENSMUSG00000056328">
    <property type="expression patterns" value="Expressed in masseter muscle and 97 other cell types or tissues"/>
</dbReference>
<dbReference type="ExpressionAtlas" id="Q5SX40">
    <property type="expression patterns" value="baseline and differential"/>
</dbReference>
<dbReference type="GO" id="GO:0031672">
    <property type="term" value="C:A band"/>
    <property type="evidence" value="ECO:0000314"/>
    <property type="project" value="MGI"/>
</dbReference>
<dbReference type="GO" id="GO:0036464">
    <property type="term" value="C:cytoplasmic ribonucleoprotein granule"/>
    <property type="evidence" value="ECO:0007669"/>
    <property type="project" value="Ensembl"/>
</dbReference>
<dbReference type="GO" id="GO:0014704">
    <property type="term" value="C:intercalated disc"/>
    <property type="evidence" value="ECO:0000314"/>
    <property type="project" value="MGI"/>
</dbReference>
<dbReference type="GO" id="GO:0005859">
    <property type="term" value="C:muscle myosin complex"/>
    <property type="evidence" value="ECO:0000266"/>
    <property type="project" value="MGI"/>
</dbReference>
<dbReference type="GO" id="GO:0032982">
    <property type="term" value="C:myosin filament"/>
    <property type="evidence" value="ECO:0007669"/>
    <property type="project" value="UniProtKB-KW"/>
</dbReference>
<dbReference type="GO" id="GO:0051015">
    <property type="term" value="F:actin filament binding"/>
    <property type="evidence" value="ECO:0007669"/>
    <property type="project" value="InterPro"/>
</dbReference>
<dbReference type="GO" id="GO:0005524">
    <property type="term" value="F:ATP binding"/>
    <property type="evidence" value="ECO:0007669"/>
    <property type="project" value="UniProtKB-KW"/>
</dbReference>
<dbReference type="GO" id="GO:0005516">
    <property type="term" value="F:calmodulin binding"/>
    <property type="evidence" value="ECO:0007669"/>
    <property type="project" value="UniProtKB-KW"/>
</dbReference>
<dbReference type="GO" id="GO:0003774">
    <property type="term" value="F:cytoskeletal motor activity"/>
    <property type="evidence" value="ECO:0007669"/>
    <property type="project" value="InterPro"/>
</dbReference>
<dbReference type="GO" id="GO:0006936">
    <property type="term" value="P:muscle contraction"/>
    <property type="evidence" value="ECO:0007669"/>
    <property type="project" value="Ensembl"/>
</dbReference>
<dbReference type="CDD" id="cd14910">
    <property type="entry name" value="MYSc_Myh1_mammals"/>
    <property type="match status" value="1"/>
</dbReference>
<dbReference type="FunFam" id="1.10.10.820:FF:000001">
    <property type="entry name" value="Myosin heavy chain"/>
    <property type="match status" value="1"/>
</dbReference>
<dbReference type="FunFam" id="1.20.5.340:FF:000002">
    <property type="entry name" value="Myosin heavy chain"/>
    <property type="match status" value="1"/>
</dbReference>
<dbReference type="FunFam" id="1.20.5.340:FF:000003">
    <property type="entry name" value="Myosin heavy chain"/>
    <property type="match status" value="1"/>
</dbReference>
<dbReference type="FunFam" id="1.20.5.340:FF:000004">
    <property type="entry name" value="Myosin heavy chain"/>
    <property type="match status" value="1"/>
</dbReference>
<dbReference type="FunFam" id="1.20.5.340:FF:000006">
    <property type="entry name" value="Myosin heavy chain"/>
    <property type="match status" value="1"/>
</dbReference>
<dbReference type="FunFam" id="1.20.5.340:FF:000013">
    <property type="entry name" value="Myosin heavy chain"/>
    <property type="match status" value="1"/>
</dbReference>
<dbReference type="FunFam" id="1.20.5.370:FF:000001">
    <property type="entry name" value="Myosin heavy chain"/>
    <property type="match status" value="1"/>
</dbReference>
<dbReference type="FunFam" id="1.20.5.370:FF:000002">
    <property type="entry name" value="Myosin heavy chain"/>
    <property type="match status" value="1"/>
</dbReference>
<dbReference type="FunFam" id="1.20.5.370:FF:000003">
    <property type="entry name" value="Myosin heavy chain"/>
    <property type="match status" value="1"/>
</dbReference>
<dbReference type="FunFam" id="1.20.5.370:FF:000007">
    <property type="entry name" value="Myosin heavy chain"/>
    <property type="match status" value="1"/>
</dbReference>
<dbReference type="FunFam" id="1.20.5.370:FF:000008">
    <property type="entry name" value="Myosin heavy chain"/>
    <property type="match status" value="1"/>
</dbReference>
<dbReference type="FunFam" id="1.20.5.4820:FF:000001">
    <property type="entry name" value="Myosin heavy chain"/>
    <property type="match status" value="1"/>
</dbReference>
<dbReference type="FunFam" id="1.20.58.530:FF:000001">
    <property type="entry name" value="Myosin heavy chain"/>
    <property type="match status" value="1"/>
</dbReference>
<dbReference type="FunFam" id="2.30.30.360:FF:000001">
    <property type="entry name" value="Myosin heavy chain"/>
    <property type="match status" value="1"/>
</dbReference>
<dbReference type="FunFam" id="3.40.850.10:FF:000024">
    <property type="entry name" value="Myosin heavy chain, isoform J"/>
    <property type="match status" value="1"/>
</dbReference>
<dbReference type="FunFam" id="1.20.120.720:FF:000001">
    <property type="entry name" value="Myosin heavy chain, muscle"/>
    <property type="match status" value="1"/>
</dbReference>
<dbReference type="Gene3D" id="1.10.10.820">
    <property type="match status" value="1"/>
</dbReference>
<dbReference type="Gene3D" id="1.20.5.340">
    <property type="match status" value="5"/>
</dbReference>
<dbReference type="Gene3D" id="1.20.5.370">
    <property type="match status" value="4"/>
</dbReference>
<dbReference type="Gene3D" id="1.20.5.4820">
    <property type="match status" value="1"/>
</dbReference>
<dbReference type="Gene3D" id="1.20.58.530">
    <property type="match status" value="1"/>
</dbReference>
<dbReference type="Gene3D" id="6.10.250.2420">
    <property type="match status" value="1"/>
</dbReference>
<dbReference type="Gene3D" id="3.40.850.10">
    <property type="entry name" value="Kinesin motor domain"/>
    <property type="match status" value="1"/>
</dbReference>
<dbReference type="Gene3D" id="2.30.30.360">
    <property type="entry name" value="Myosin S1 fragment, N-terminal"/>
    <property type="match status" value="1"/>
</dbReference>
<dbReference type="Gene3D" id="1.20.120.720">
    <property type="entry name" value="Myosin VI head, motor domain, U50 subdomain"/>
    <property type="match status" value="1"/>
</dbReference>
<dbReference type="InterPro" id="IPR000048">
    <property type="entry name" value="IQ_motif_EF-hand-BS"/>
</dbReference>
<dbReference type="InterPro" id="IPR036961">
    <property type="entry name" value="Kinesin_motor_dom_sf"/>
</dbReference>
<dbReference type="InterPro" id="IPR001609">
    <property type="entry name" value="Myosin_head_motor_dom-like"/>
</dbReference>
<dbReference type="InterPro" id="IPR004009">
    <property type="entry name" value="Myosin_N"/>
</dbReference>
<dbReference type="InterPro" id="IPR008989">
    <property type="entry name" value="Myosin_S1_N"/>
</dbReference>
<dbReference type="InterPro" id="IPR002928">
    <property type="entry name" value="Myosin_tail"/>
</dbReference>
<dbReference type="InterPro" id="IPR027417">
    <property type="entry name" value="P-loop_NTPase"/>
</dbReference>
<dbReference type="InterPro" id="IPR014751">
    <property type="entry name" value="XRCC4-like_C"/>
</dbReference>
<dbReference type="PANTHER" id="PTHR45615">
    <property type="entry name" value="MYOSIN HEAVY CHAIN, NON-MUSCLE"/>
    <property type="match status" value="1"/>
</dbReference>
<dbReference type="PANTHER" id="PTHR45615:SF2">
    <property type="entry name" value="MYOSIN-1"/>
    <property type="match status" value="1"/>
</dbReference>
<dbReference type="Pfam" id="PF00063">
    <property type="entry name" value="Myosin_head"/>
    <property type="match status" value="1"/>
</dbReference>
<dbReference type="Pfam" id="PF02736">
    <property type="entry name" value="Myosin_N"/>
    <property type="match status" value="1"/>
</dbReference>
<dbReference type="Pfam" id="PF01576">
    <property type="entry name" value="Myosin_tail_1"/>
    <property type="match status" value="1"/>
</dbReference>
<dbReference type="PRINTS" id="PR00193">
    <property type="entry name" value="MYOSINHEAVY"/>
</dbReference>
<dbReference type="SMART" id="SM00015">
    <property type="entry name" value="IQ"/>
    <property type="match status" value="1"/>
</dbReference>
<dbReference type="SMART" id="SM00242">
    <property type="entry name" value="MYSc"/>
    <property type="match status" value="1"/>
</dbReference>
<dbReference type="SUPFAM" id="SSF90257">
    <property type="entry name" value="Myosin rod fragments"/>
    <property type="match status" value="5"/>
</dbReference>
<dbReference type="SUPFAM" id="SSF52540">
    <property type="entry name" value="P-loop containing nucleoside triphosphate hydrolases"/>
    <property type="match status" value="1"/>
</dbReference>
<dbReference type="PROSITE" id="PS50096">
    <property type="entry name" value="IQ"/>
    <property type="match status" value="1"/>
</dbReference>
<dbReference type="PROSITE" id="PS51456">
    <property type="entry name" value="MYOSIN_MOTOR"/>
    <property type="match status" value="1"/>
</dbReference>
<dbReference type="PROSITE" id="PS51844">
    <property type="entry name" value="SH3_LIKE"/>
    <property type="match status" value="1"/>
</dbReference>
<protein>
    <recommendedName>
        <fullName>Myosin-1</fullName>
    </recommendedName>
    <alternativeName>
        <fullName evidence="11">Myosin heavy chain 1</fullName>
    </alternativeName>
    <alternativeName>
        <fullName>Myosin heavy chain 2x</fullName>
        <shortName>MyHC-2x</shortName>
    </alternativeName>
    <alternativeName>
        <fullName>Myosin heavy chain, skeletal muscle, adult 1</fullName>
    </alternativeName>
</protein>
<sequence length="1942" mass="223342">MSSDAEMAVFGEAAPYLRKSEKERIEAQNKPFDAKSSVFVVDAKESFVKATVQSREGGKVTAKTEGGTTVTVKDDQVYPMNPPKYDKIEDMAMMTHLHEPAVLYNLKERYAAWMIYTYSGLFCVTVNPYKWLPVYNAEVVAAYRGKKRQEAPPHIFSISDNAYQFMLTDRENQSILITGESGAGKTVNTKRVIQYFATIAVTGEKKKEEATSGKMQGTLEDQIISANPLLEAFGNAKTVRNDNSSRFGKFIRIHFGTTGKLASADIETYLLEKSRVTFQLKAERSYHIFYQIMSNKKPDLIEMLLITTNPYDYAFVSQGEITVPSIDDQEELMATDSAIDILGFTSDERVSIYKLTGAVMHYGNMKFKQKQREEQAEPDGTEVADKAAYLQNLNSADLLKALCYPRVKVGNEYVTKGQTVQQVYNSVGALAKAVYEKMFLWMVTRINQQLDTKQPRQYFIGVLDIAGFEIFDFNSLEQLCINFTNEKLQQFFNHHMFVLEQEEYKKEGIEWEFIDFGMDLAACIELIEKPMGIFSILEEECMFPKATDTSFKNKLYEQHLGKSNNFQKPKPAKGKVEAHFSLVHYAGTVDYNIAGWLDKNKDPLNETVVGLYQKSSMKTLAYLFSGAAAAAEAESGGGGGKKGAKKKGSSFQTVSALFRENLNKLMTNLRSTHPHFVRCIIPNETKTPGAMEHELVLHQLRCNGVLEGIRICRKGFPSRILYADFKQRYKVLNASAIPEGQFIDSKKASEKLLGSIDIDHTQYKFGHTKVFFKAGLLGLLEEMRDDKLAQLITRTQAMCRGYLARVEYQKMVERRESIFCIQYNVRAFMNVKHWPWMKLYFKIKPLLKSAETEKEMANMKEEFEKAKENLAKAEAKRKELEEKMVALMQEKNDLQLQVQSEADSLADAEERCDQLIKTKIQLEAKIKEVTERAEDEEEINAELTAKKRKLEDECSELKKDIDDLELTLAKVEKEKHATENKVKNLTEEMAGLDETIAKLTKEKKALQEAHQQTLDDLQAEEDKVNTLTKAKIKLEQQVDDLEGSLEQEKKIRMDLERAKRKLEGDLKLAQESTMDVENDKQQLDEKLKKKEFEMSNLQSKIEDEQALGMQLQKKIKELQARIEELEEEIEAERASRAKAEKQRSDLSRELEEISERLEEAGGATSAQIEMNKKREAEFQKMRRDLEEATLQHEATAATLRKKHADSVAELGEQIDNLQRVKQKLEKEKSEMKMEIDDLASNMEVISKSKGNLEKMCRTLEDQVSELKTKEEEQQRLINELTAQRGRLQTESGEYSRQLDEKDSLVSQLSRGKQAFTQQIEELKRQLEEEIKAKSALAHALQSSRHDCDLLREQYEEEQEAKAELQRAMSKANSEVAQWRTKYETDAIQRTEELEEAKKKLAQRLQDAEEHVEAVNAKCASLEKTKQRLQNEVEDLMIDVERTNAACAALDKKQRNFDKILAEWKQKYEETHAELEASQKESRSLSTELFKIKNAYEESLDHLETLKRENKNLQQEISDLTEQIAEGGKRIHELEKIKKQIEQEKSELQAALEEAEASLEHEEGKILRIQLELNQVKSEIDRKIAEKDEEIDQLKRNHIRVVESMQSTLDAEIRSRNDAIRLKKKMEGDLNEMEIQLNHSNRMAAEALRNYRNTQGILKDTQLHLDDALRGQEDLKEQLAMVERRANLLQAEIEELRATLEQTERSRKIAEQELLDASERVQLLHTQNTSLINTKKKLETDISQIQGEMEDIVQEARNAEEKAKKAITDAAMMAEELKKEQDTSAHLERMKKNLEQTVKDLQHRLDEAEQLALKGGKKQIQKLEARVRELEGEVENEQKRNVEAIKGLRKHERRVKELTYQTEEDRKNVLRLQDLVDKLQSKVKAYKRQAEEAEEQSNVNLAKFRKIQHELEEAEERADIAESQVNKLRVKSREVHTKIISEE</sequence>
<comment type="function">
    <text evidence="10">Required for normal hearing. It plays a role in cochlear amplification of auditory stimuli, likely through the positive regulation of prestin (SLC26A5) activity and outer hair cell (OHC) electromotility.</text>
</comment>
<comment type="subunit">
    <text evidence="2">Muscle myosin is a hexameric protein that consists of 2 heavy chain subunits (MHC), 2 alkali light chain subunits (MLC) and 2 regulatory light chain subunits (MLC-2). Interacts with SLC26A5.</text>
</comment>
<comment type="subcellular location">
    <subcellularLocation>
        <location>Cytoplasm</location>
        <location>Myofibril</location>
    </subcellularLocation>
    <text>Thick filaments of the myofibrils.</text>
</comment>
<comment type="tissue specificity">
    <text evidence="10">Expressed in the cochlea (at protein level). Strongly expressed in spiral ganglion neurons with axonal sprouts and supporting cells around hair cells. In the organ of Corti, it is expressed in inner and outer hair cells, and in supporting cells.</text>
</comment>
<comment type="domain">
    <text>The rodlike tail sequence is highly repetitive, showing cycles of a 28-residue repeat pattern composed of 4 heptapeptides, characteristic for alpha-helical coiled coils.</text>
</comment>
<comment type="domain">
    <text evidence="12">Limited proteolysis of myosin heavy chain produces 1 light meromyosin (LMM) and 1 heavy meromyosin (HMM). HMM can be further cleaved into 2 globular subfragments (S1) and 1 rod-shaped subfragment (S2).</text>
</comment>
<comment type="disruption phenotype">
    <text evidence="10">Knockout mice exhibit impaired hearing and outer hair cell dysfunction. Reduced prestin (SLC26A5) activity in outer hair cells is a major pathological feature in knockout animals.</text>
</comment>
<comment type="similarity">
    <text evidence="12">Belongs to the TRAFAC class myosin-kinesin ATPase superfamily. Myosin family.</text>
</comment>
<comment type="caution">
    <text evidence="12">Represents a conventional myosin. This protein should not be confused with the unconventional myosin-1 (MYO1).</text>
</comment>
<evidence type="ECO:0000250" key="1"/>
<evidence type="ECO:0000250" key="2">
    <source>
        <dbReference type="UniProtKB" id="P12882"/>
    </source>
</evidence>
<evidence type="ECO:0000250" key="3">
    <source>
        <dbReference type="UniProtKB" id="Q28641"/>
    </source>
</evidence>
<evidence type="ECO:0000250" key="4">
    <source>
        <dbReference type="UniProtKB" id="Q29RW1"/>
    </source>
</evidence>
<evidence type="ECO:0000255" key="5"/>
<evidence type="ECO:0000255" key="6">
    <source>
        <dbReference type="PROSITE-ProRule" id="PRU00116"/>
    </source>
</evidence>
<evidence type="ECO:0000255" key="7">
    <source>
        <dbReference type="PROSITE-ProRule" id="PRU00782"/>
    </source>
</evidence>
<evidence type="ECO:0000255" key="8">
    <source>
        <dbReference type="PROSITE-ProRule" id="PRU01190"/>
    </source>
</evidence>
<evidence type="ECO:0000256" key="9">
    <source>
        <dbReference type="SAM" id="MobiDB-lite"/>
    </source>
</evidence>
<evidence type="ECO:0000269" key="10">
    <source>
    </source>
</evidence>
<evidence type="ECO:0000303" key="11">
    <source>
    </source>
</evidence>
<evidence type="ECO:0000305" key="12"/>
<evidence type="ECO:0000312" key="13">
    <source>
        <dbReference type="MGI" id="MGI:1339711"/>
    </source>
</evidence>
<proteinExistence type="evidence at protein level"/>
<organism>
    <name type="scientific">Mus musculus</name>
    <name type="common">Mouse</name>
    <dbReference type="NCBI Taxonomy" id="10090"/>
    <lineage>
        <taxon>Eukaryota</taxon>
        <taxon>Metazoa</taxon>
        <taxon>Chordata</taxon>
        <taxon>Craniata</taxon>
        <taxon>Vertebrata</taxon>
        <taxon>Euteleostomi</taxon>
        <taxon>Mammalia</taxon>
        <taxon>Eutheria</taxon>
        <taxon>Euarchontoglires</taxon>
        <taxon>Glires</taxon>
        <taxon>Rodentia</taxon>
        <taxon>Myomorpha</taxon>
        <taxon>Muroidea</taxon>
        <taxon>Muridae</taxon>
        <taxon>Murinae</taxon>
        <taxon>Mus</taxon>
        <taxon>Mus</taxon>
    </lineage>
</organism>
<accession>Q5SX40</accession>
<accession>Q32P18</accession>
<gene>
    <name evidence="13" type="primary">Myh1</name>
</gene>
<name>MYH1_MOUSE</name>